<protein>
    <recommendedName>
        <fullName evidence="1">NAD(P)H-quinone oxidoreductase subunit M</fullName>
        <ecNumber evidence="1">7.1.1.-</ecNumber>
    </recommendedName>
    <alternativeName>
        <fullName evidence="1">NAD(P)H dehydrogenase I subunit M</fullName>
        <shortName evidence="1">NDH-1 subunit M</shortName>
        <shortName evidence="1">NDH-M</shortName>
    </alternativeName>
</protein>
<comment type="function">
    <text evidence="1">NDH-1 shuttles electrons from an unknown electron donor, via FMN and iron-sulfur (Fe-S) centers, to quinones in the respiratory and/or the photosynthetic chain. The immediate electron acceptor for the enzyme in this species is believed to be plastoquinone. Couples the redox reaction to proton translocation, and thus conserves the redox energy in a proton gradient. Cyanobacterial NDH-1 also plays a role in inorganic carbon-concentration.</text>
</comment>
<comment type="catalytic activity">
    <reaction evidence="1">
        <text>a plastoquinone + NADH + (n+1) H(+)(in) = a plastoquinol + NAD(+) + n H(+)(out)</text>
        <dbReference type="Rhea" id="RHEA:42608"/>
        <dbReference type="Rhea" id="RHEA-COMP:9561"/>
        <dbReference type="Rhea" id="RHEA-COMP:9562"/>
        <dbReference type="ChEBI" id="CHEBI:15378"/>
        <dbReference type="ChEBI" id="CHEBI:17757"/>
        <dbReference type="ChEBI" id="CHEBI:57540"/>
        <dbReference type="ChEBI" id="CHEBI:57945"/>
        <dbReference type="ChEBI" id="CHEBI:62192"/>
    </reaction>
</comment>
<comment type="catalytic activity">
    <reaction evidence="1">
        <text>a plastoquinone + NADPH + (n+1) H(+)(in) = a plastoquinol + NADP(+) + n H(+)(out)</text>
        <dbReference type="Rhea" id="RHEA:42612"/>
        <dbReference type="Rhea" id="RHEA-COMP:9561"/>
        <dbReference type="Rhea" id="RHEA-COMP:9562"/>
        <dbReference type="ChEBI" id="CHEBI:15378"/>
        <dbReference type="ChEBI" id="CHEBI:17757"/>
        <dbReference type="ChEBI" id="CHEBI:57783"/>
        <dbReference type="ChEBI" id="CHEBI:58349"/>
        <dbReference type="ChEBI" id="CHEBI:62192"/>
    </reaction>
</comment>
<comment type="subunit">
    <text evidence="1">NDH-1 can be composed of about 15 different subunits; different subcomplexes with different compositions have been identified which probably have different functions.</text>
</comment>
<comment type="subcellular location">
    <subcellularLocation>
        <location evidence="1">Cellular thylakoid membrane</location>
        <topology evidence="1">Peripheral membrane protein</topology>
        <orientation evidence="1">Cytoplasmic side</orientation>
    </subcellularLocation>
</comment>
<comment type="similarity">
    <text evidence="1">Belongs to the complex I NdhM subunit family.</text>
</comment>
<sequence length="115" mass="13318">MTDPLLKCTTRHIRIFTAITQNNNLIEDSDHLTMDLDPDNEFLWENQAIEKVQNRFSELVESQVGQELSDYVLRKIGSDLESYIRQMLQAGEVSYNPDSRVLNYSMGLPRTPELL</sequence>
<keyword id="KW-0472">Membrane</keyword>
<keyword id="KW-0520">NAD</keyword>
<keyword id="KW-0521">NADP</keyword>
<keyword id="KW-0618">Plastoquinone</keyword>
<keyword id="KW-0874">Quinone</keyword>
<keyword id="KW-1185">Reference proteome</keyword>
<keyword id="KW-0793">Thylakoid</keyword>
<keyword id="KW-1278">Translocase</keyword>
<keyword id="KW-0813">Transport</keyword>
<name>NDHM_PROMA</name>
<organism>
    <name type="scientific">Prochlorococcus marinus (strain SARG / CCMP1375 / SS120)</name>
    <dbReference type="NCBI Taxonomy" id="167539"/>
    <lineage>
        <taxon>Bacteria</taxon>
        <taxon>Bacillati</taxon>
        <taxon>Cyanobacteriota</taxon>
        <taxon>Cyanophyceae</taxon>
        <taxon>Synechococcales</taxon>
        <taxon>Prochlorococcaceae</taxon>
        <taxon>Prochlorococcus</taxon>
    </lineage>
</organism>
<evidence type="ECO:0000255" key="1">
    <source>
        <dbReference type="HAMAP-Rule" id="MF_01352"/>
    </source>
</evidence>
<accession>Q7VE46</accession>
<gene>
    <name evidence="1" type="primary">ndhM</name>
    <name type="ordered locus">Pro_0168</name>
</gene>
<proteinExistence type="inferred from homology"/>
<reference key="1">
    <citation type="journal article" date="2003" name="Proc. Natl. Acad. Sci. U.S.A.">
        <title>Genome sequence of the cyanobacterium Prochlorococcus marinus SS120, a nearly minimal oxyphototrophic genome.</title>
        <authorList>
            <person name="Dufresne A."/>
            <person name="Salanoubat M."/>
            <person name="Partensky F."/>
            <person name="Artiguenave F."/>
            <person name="Axmann I.M."/>
            <person name="Barbe V."/>
            <person name="Duprat S."/>
            <person name="Galperin M.Y."/>
            <person name="Koonin E.V."/>
            <person name="Le Gall F."/>
            <person name="Makarova K.S."/>
            <person name="Ostrowski M."/>
            <person name="Oztas S."/>
            <person name="Robert C."/>
            <person name="Rogozin I.B."/>
            <person name="Scanlan D.J."/>
            <person name="Tandeau de Marsac N."/>
            <person name="Weissenbach J."/>
            <person name="Wincker P."/>
            <person name="Wolf Y.I."/>
            <person name="Hess W.R."/>
        </authorList>
    </citation>
    <scope>NUCLEOTIDE SEQUENCE [LARGE SCALE GENOMIC DNA]</scope>
    <source>
        <strain>SARG / CCMP1375 / SS120</strain>
    </source>
</reference>
<feature type="chain" id="PRO_0000352185" description="NAD(P)H-quinone oxidoreductase subunit M">
    <location>
        <begin position="1"/>
        <end position="115"/>
    </location>
</feature>
<dbReference type="EC" id="7.1.1.-" evidence="1"/>
<dbReference type="EMBL" id="AE017126">
    <property type="protein sequence ID" value="AAP99214.1"/>
    <property type="molecule type" value="Genomic_DNA"/>
</dbReference>
<dbReference type="RefSeq" id="NP_874562.1">
    <property type="nucleotide sequence ID" value="NC_005042.1"/>
</dbReference>
<dbReference type="RefSeq" id="WP_011124323.1">
    <property type="nucleotide sequence ID" value="NC_005042.1"/>
</dbReference>
<dbReference type="SMR" id="Q7VE46"/>
<dbReference type="STRING" id="167539.Pro_0168"/>
<dbReference type="EnsemblBacteria" id="AAP99214">
    <property type="protein sequence ID" value="AAP99214"/>
    <property type="gene ID" value="Pro_0168"/>
</dbReference>
<dbReference type="KEGG" id="pma:Pro_0168"/>
<dbReference type="PATRIC" id="fig|167539.5.peg.174"/>
<dbReference type="eggNOG" id="ENOG5031AQM">
    <property type="taxonomic scope" value="Bacteria"/>
</dbReference>
<dbReference type="HOGENOM" id="CLU_137431_0_0_3"/>
<dbReference type="OrthoDB" id="461686at2"/>
<dbReference type="Proteomes" id="UP000001420">
    <property type="component" value="Chromosome"/>
</dbReference>
<dbReference type="GO" id="GO:0031676">
    <property type="term" value="C:plasma membrane-derived thylakoid membrane"/>
    <property type="evidence" value="ECO:0007669"/>
    <property type="project" value="UniProtKB-SubCell"/>
</dbReference>
<dbReference type="GO" id="GO:0016655">
    <property type="term" value="F:oxidoreductase activity, acting on NAD(P)H, quinone or similar compound as acceptor"/>
    <property type="evidence" value="ECO:0007669"/>
    <property type="project" value="UniProtKB-UniRule"/>
</dbReference>
<dbReference type="GO" id="GO:0048038">
    <property type="term" value="F:quinone binding"/>
    <property type="evidence" value="ECO:0007669"/>
    <property type="project" value="UniProtKB-KW"/>
</dbReference>
<dbReference type="HAMAP" id="MF_01352">
    <property type="entry name" value="NDH1_NDH1M"/>
    <property type="match status" value="1"/>
</dbReference>
<dbReference type="InterPro" id="IPR018922">
    <property type="entry name" value="NdhM"/>
</dbReference>
<dbReference type="PANTHER" id="PTHR36900">
    <property type="entry name" value="NAD(P)H-QUINONE OXIDOREDUCTASE SUBUNIT M, CHLOROPLASTIC"/>
    <property type="match status" value="1"/>
</dbReference>
<dbReference type="PANTHER" id="PTHR36900:SF1">
    <property type="entry name" value="NAD(P)H-QUINONE OXIDOREDUCTASE SUBUNIT M, CHLOROPLASTIC"/>
    <property type="match status" value="1"/>
</dbReference>
<dbReference type="Pfam" id="PF10664">
    <property type="entry name" value="NdhM"/>
    <property type="match status" value="1"/>
</dbReference>